<dbReference type="EMBL" id="X56049">
    <property type="protein sequence ID" value="CAA39526.1"/>
    <property type="molecule type" value="Genomic_DNA"/>
</dbReference>
<dbReference type="EMBL" id="AL009126">
    <property type="protein sequence ID" value="CAB13500.2"/>
    <property type="molecule type" value="Genomic_DNA"/>
</dbReference>
<dbReference type="PIR" id="G42365">
    <property type="entry name" value="G42365"/>
</dbReference>
<dbReference type="RefSeq" id="NP_389509.2">
    <property type="nucleotide sequence ID" value="NC_000964.3"/>
</dbReference>
<dbReference type="RefSeq" id="WP_003231973.1">
    <property type="nucleotide sequence ID" value="NZ_OZ025638.1"/>
</dbReference>
<dbReference type="SMR" id="P23451"/>
<dbReference type="FunCoup" id="P23451">
    <property type="interactions" value="70"/>
</dbReference>
<dbReference type="STRING" id="224308.BSU16270"/>
<dbReference type="PaxDb" id="224308-BSU16270"/>
<dbReference type="EnsemblBacteria" id="CAB13500">
    <property type="protein sequence ID" value="CAB13500"/>
    <property type="gene ID" value="BSU_16270"/>
</dbReference>
<dbReference type="GeneID" id="937494"/>
<dbReference type="KEGG" id="bsu:BSU16270"/>
<dbReference type="PATRIC" id="fig|224308.179.peg.1767"/>
<dbReference type="eggNOG" id="COG3144">
    <property type="taxonomic scope" value="Bacteria"/>
</dbReference>
<dbReference type="InParanoid" id="P23451"/>
<dbReference type="OrthoDB" id="2990946at2"/>
<dbReference type="BioCyc" id="BSUB:BSU16270-MONOMER"/>
<dbReference type="Proteomes" id="UP000001570">
    <property type="component" value="Chromosome"/>
</dbReference>
<dbReference type="GO" id="GO:0009424">
    <property type="term" value="C:bacterial-type flagellum hook"/>
    <property type="evidence" value="ECO:0007669"/>
    <property type="project" value="InterPro"/>
</dbReference>
<dbReference type="GO" id="GO:0044780">
    <property type="term" value="P:bacterial-type flagellum assembly"/>
    <property type="evidence" value="ECO:0000315"/>
    <property type="project" value="CACAO"/>
</dbReference>
<dbReference type="GO" id="GO:0071978">
    <property type="term" value="P:bacterial-type flagellum-dependent swarming motility"/>
    <property type="evidence" value="ECO:0000315"/>
    <property type="project" value="CACAO"/>
</dbReference>
<dbReference type="CDD" id="cd17470">
    <property type="entry name" value="T3SS_Flik_C"/>
    <property type="match status" value="1"/>
</dbReference>
<dbReference type="FunFam" id="3.30.750.140:FF:000002">
    <property type="entry name" value="Flagellar hook-length control protein"/>
    <property type="match status" value="1"/>
</dbReference>
<dbReference type="Gene3D" id="3.30.750.140">
    <property type="match status" value="1"/>
</dbReference>
<dbReference type="InterPro" id="IPR001635">
    <property type="entry name" value="Flag_hook_Flik"/>
</dbReference>
<dbReference type="InterPro" id="IPR021136">
    <property type="entry name" value="Flagellar_hook_control-like_C"/>
</dbReference>
<dbReference type="InterPro" id="IPR038610">
    <property type="entry name" value="FliK-like_C_sf"/>
</dbReference>
<dbReference type="Pfam" id="PF02120">
    <property type="entry name" value="Flg_hook"/>
    <property type="match status" value="1"/>
</dbReference>
<dbReference type="PRINTS" id="PR01007">
    <property type="entry name" value="FLGHOOKFLIK"/>
</dbReference>
<name>FLIK_BACSU</name>
<sequence length="487" mass="53533">MKLLELAGPLLQTTTGSAAKNMKSSQGVFQNWLMSEAGLKELSEQGKGTPNSEDQLLADALKKIGEWLNASPEDQDKQNADLLQTLSKLTGKQLDANALQMLQNLLQAVESKMSGGTDQLLTETEKIFSEAKTALSANDSASDINGALKSDKEQSNQENEVSEPAKELIYIQMFISQLVEGNKLTDLGNGNEAHAIYQNGDQFLSALEKKGVSQQLIQDLKQQIFTKAESSSKLYSMTASELKSFQSLMDQMSMLPQKGTKEWSLAESQLKAFLLSKSSESSQDFGKSVLTPLSQSSSSKNASDVSGSIQPVDSKSGLQMLFSGYRGIGGVQTLDLQQMSSDIPNAETKTVADQVINAWKQMKYTPFGRSTGSFTIRLNPEHLGFVTIKLTNENGMFQSKIIASSQSAKELLEQHLPQLKQSLPNMAVQIDRFTLPVQSGDQPIYGQLADEQKQQQEGQRQQRQKKQSNDFGDLLDEVSMVEMEEEE</sequence>
<gene>
    <name type="primary">fliK</name>
    <name type="ordered locus">BSU16270</name>
</gene>
<proteinExistence type="inferred from homology"/>
<feature type="chain" id="PRO_0000180904" description="Probable flagellar hook-length control protein">
    <location>
        <begin position="1"/>
        <end position="487"/>
    </location>
</feature>
<feature type="region of interest" description="Disordered" evidence="2">
    <location>
        <begin position="144"/>
        <end position="163"/>
    </location>
</feature>
<feature type="region of interest" description="Disordered" evidence="2">
    <location>
        <begin position="286"/>
        <end position="311"/>
    </location>
</feature>
<feature type="region of interest" description="Disordered" evidence="2">
    <location>
        <begin position="447"/>
        <end position="487"/>
    </location>
</feature>
<feature type="compositionally biased region" description="Polar residues" evidence="2">
    <location>
        <begin position="300"/>
        <end position="311"/>
    </location>
</feature>
<feature type="sequence conflict" description="In Ref. 1; CAA39526." evidence="3" ref="1">
    <original>MKLLELAGPLLQTTTGSAAKNMKSSQGVFQNWLMSEAGLKELSEQGKGTPNSEDQLLADA</original>
    <variation>MR</variation>
    <location>
        <begin position="1"/>
        <end position="60"/>
    </location>
</feature>
<feature type="sequence conflict" description="In Ref. 1; CAA39526." evidence="3" ref="1">
    <original>MSG</original>
    <variation>NVS</variation>
    <location>
        <begin position="113"/>
        <end position="115"/>
    </location>
</feature>
<feature type="sequence conflict" description="In Ref. 1; CAA39526." evidence="3" ref="1">
    <original>S</original>
    <variation>T</variation>
    <location>
        <position position="268"/>
    </location>
</feature>
<reference key="1">
    <citation type="journal article" date="1991" name="J. Bacteriol.">
        <title>The flaA locus of Bacillus subtilis is part of a large operon coding for flagellar structures, motility functions, and an ATPase-like polypeptide.</title>
        <authorList>
            <person name="Albertini A.M."/>
            <person name="Caramori T."/>
            <person name="Crabb W.D."/>
            <person name="Scoffone F."/>
            <person name="Galizzi A."/>
        </authorList>
    </citation>
    <scope>NUCLEOTIDE SEQUENCE [GENOMIC DNA]</scope>
    <source>
        <strain>168</strain>
    </source>
</reference>
<reference key="2">
    <citation type="journal article" date="1997" name="Nature">
        <title>The complete genome sequence of the Gram-positive bacterium Bacillus subtilis.</title>
        <authorList>
            <person name="Kunst F."/>
            <person name="Ogasawara N."/>
            <person name="Moszer I."/>
            <person name="Albertini A.M."/>
            <person name="Alloni G."/>
            <person name="Azevedo V."/>
            <person name="Bertero M.G."/>
            <person name="Bessieres P."/>
            <person name="Bolotin A."/>
            <person name="Borchert S."/>
            <person name="Borriss R."/>
            <person name="Boursier L."/>
            <person name="Brans A."/>
            <person name="Braun M."/>
            <person name="Brignell S.C."/>
            <person name="Bron S."/>
            <person name="Brouillet S."/>
            <person name="Bruschi C.V."/>
            <person name="Caldwell B."/>
            <person name="Capuano V."/>
            <person name="Carter N.M."/>
            <person name="Choi S.-K."/>
            <person name="Codani J.-J."/>
            <person name="Connerton I.F."/>
            <person name="Cummings N.J."/>
            <person name="Daniel R.A."/>
            <person name="Denizot F."/>
            <person name="Devine K.M."/>
            <person name="Duesterhoeft A."/>
            <person name="Ehrlich S.D."/>
            <person name="Emmerson P.T."/>
            <person name="Entian K.-D."/>
            <person name="Errington J."/>
            <person name="Fabret C."/>
            <person name="Ferrari E."/>
            <person name="Foulger D."/>
            <person name="Fritz C."/>
            <person name="Fujita M."/>
            <person name="Fujita Y."/>
            <person name="Fuma S."/>
            <person name="Galizzi A."/>
            <person name="Galleron N."/>
            <person name="Ghim S.-Y."/>
            <person name="Glaser P."/>
            <person name="Goffeau A."/>
            <person name="Golightly E.J."/>
            <person name="Grandi G."/>
            <person name="Guiseppi G."/>
            <person name="Guy B.J."/>
            <person name="Haga K."/>
            <person name="Haiech J."/>
            <person name="Harwood C.R."/>
            <person name="Henaut A."/>
            <person name="Hilbert H."/>
            <person name="Holsappel S."/>
            <person name="Hosono S."/>
            <person name="Hullo M.-F."/>
            <person name="Itaya M."/>
            <person name="Jones L.-M."/>
            <person name="Joris B."/>
            <person name="Karamata D."/>
            <person name="Kasahara Y."/>
            <person name="Klaerr-Blanchard M."/>
            <person name="Klein C."/>
            <person name="Kobayashi Y."/>
            <person name="Koetter P."/>
            <person name="Koningstein G."/>
            <person name="Krogh S."/>
            <person name="Kumano M."/>
            <person name="Kurita K."/>
            <person name="Lapidus A."/>
            <person name="Lardinois S."/>
            <person name="Lauber J."/>
            <person name="Lazarevic V."/>
            <person name="Lee S.-M."/>
            <person name="Levine A."/>
            <person name="Liu H."/>
            <person name="Masuda S."/>
            <person name="Mauel C."/>
            <person name="Medigue C."/>
            <person name="Medina N."/>
            <person name="Mellado R.P."/>
            <person name="Mizuno M."/>
            <person name="Moestl D."/>
            <person name="Nakai S."/>
            <person name="Noback M."/>
            <person name="Noone D."/>
            <person name="O'Reilly M."/>
            <person name="Ogawa K."/>
            <person name="Ogiwara A."/>
            <person name="Oudega B."/>
            <person name="Park S.-H."/>
            <person name="Parro V."/>
            <person name="Pohl T.M."/>
            <person name="Portetelle D."/>
            <person name="Porwollik S."/>
            <person name="Prescott A.M."/>
            <person name="Presecan E."/>
            <person name="Pujic P."/>
            <person name="Purnelle B."/>
            <person name="Rapoport G."/>
            <person name="Rey M."/>
            <person name="Reynolds S."/>
            <person name="Rieger M."/>
            <person name="Rivolta C."/>
            <person name="Rocha E."/>
            <person name="Roche B."/>
            <person name="Rose M."/>
            <person name="Sadaie Y."/>
            <person name="Sato T."/>
            <person name="Scanlan E."/>
            <person name="Schleich S."/>
            <person name="Schroeter R."/>
            <person name="Scoffone F."/>
            <person name="Sekiguchi J."/>
            <person name="Sekowska A."/>
            <person name="Seror S.J."/>
            <person name="Serror P."/>
            <person name="Shin B.-S."/>
            <person name="Soldo B."/>
            <person name="Sorokin A."/>
            <person name="Tacconi E."/>
            <person name="Takagi T."/>
            <person name="Takahashi H."/>
            <person name="Takemaru K."/>
            <person name="Takeuchi M."/>
            <person name="Tamakoshi A."/>
            <person name="Tanaka T."/>
            <person name="Terpstra P."/>
            <person name="Tognoni A."/>
            <person name="Tosato V."/>
            <person name="Uchiyama S."/>
            <person name="Vandenbol M."/>
            <person name="Vannier F."/>
            <person name="Vassarotti A."/>
            <person name="Viari A."/>
            <person name="Wambutt R."/>
            <person name="Wedler E."/>
            <person name="Wedler H."/>
            <person name="Weitzenegger T."/>
            <person name="Winters P."/>
            <person name="Wipat A."/>
            <person name="Yamamoto H."/>
            <person name="Yamane K."/>
            <person name="Yasumoto K."/>
            <person name="Yata K."/>
            <person name="Yoshida K."/>
            <person name="Yoshikawa H.-F."/>
            <person name="Zumstein E."/>
            <person name="Yoshikawa H."/>
            <person name="Danchin A."/>
        </authorList>
    </citation>
    <scope>NUCLEOTIDE SEQUENCE [LARGE SCALE GENOMIC DNA]</scope>
    <source>
        <strain>168</strain>
    </source>
</reference>
<reference key="3">
    <citation type="journal article" date="2009" name="Microbiology">
        <title>From a consortium sequence to a unified sequence: the Bacillus subtilis 168 reference genome a decade later.</title>
        <authorList>
            <person name="Barbe V."/>
            <person name="Cruveiller S."/>
            <person name="Kunst F."/>
            <person name="Lenoble P."/>
            <person name="Meurice G."/>
            <person name="Sekowska A."/>
            <person name="Vallenet D."/>
            <person name="Wang T."/>
            <person name="Moszer I."/>
            <person name="Medigue C."/>
            <person name="Danchin A."/>
        </authorList>
    </citation>
    <scope>SEQUENCE REVISION TO 113-115; 268 AND N-TERMINUS</scope>
</reference>
<protein>
    <recommendedName>
        <fullName>Probable flagellar hook-length control protein</fullName>
    </recommendedName>
</protein>
<organism>
    <name type="scientific">Bacillus subtilis (strain 168)</name>
    <dbReference type="NCBI Taxonomy" id="224308"/>
    <lineage>
        <taxon>Bacteria</taxon>
        <taxon>Bacillati</taxon>
        <taxon>Bacillota</taxon>
        <taxon>Bacilli</taxon>
        <taxon>Bacillales</taxon>
        <taxon>Bacillaceae</taxon>
        <taxon>Bacillus</taxon>
    </lineage>
</organism>
<comment type="function">
    <text evidence="1">Controls the length of the flagellar hook.</text>
</comment>
<comment type="similarity">
    <text evidence="3">Belongs to the FliK family.</text>
</comment>
<keyword id="KW-1005">Bacterial flagellum biogenesis</keyword>
<keyword id="KW-1185">Reference proteome</keyword>
<accession>P23451</accession>
<evidence type="ECO:0000250" key="1"/>
<evidence type="ECO:0000256" key="2">
    <source>
        <dbReference type="SAM" id="MobiDB-lite"/>
    </source>
</evidence>
<evidence type="ECO:0000305" key="3"/>